<protein>
    <recommendedName>
        <fullName>Multifunctional procollagen lysine hydroxylase and glycosyltransferase</fullName>
    </recommendedName>
    <alternativeName>
        <fullName>Lethal protein 268</fullName>
    </alternativeName>
    <domain>
        <recommendedName>
            <fullName>Procollagen-lysine,2-oxoglutarate 5-dioxygenase</fullName>
            <ecNumber evidence="1">1.14.11.4</ecNumber>
        </recommendedName>
        <alternativeName>
            <fullName>Lysyl hydroxylase</fullName>
            <shortName>LH</shortName>
        </alternativeName>
    </domain>
    <domain>
        <recommendedName>
            <fullName>Procollagen glycosyltransferase</fullName>
            <ecNumber evidence="1">2.4.1.50</ecNumber>
            <ecNumber evidence="6">2.4.1.66</ecNumber>
        </recommendedName>
        <alternativeName>
            <fullName>Galactosylhydroxylysine-glucosyltransferase</fullName>
        </alternativeName>
        <alternativeName>
            <fullName>Procollagen galactosyltransferase</fullName>
        </alternativeName>
        <alternativeName>
            <fullName>Procollagen glucosyltransferase</fullName>
        </alternativeName>
    </domain>
</protein>
<gene>
    <name type="primary">let-268</name>
    <name type="ORF">F52H3.1</name>
</gene>
<proteinExistence type="evidence at protein level"/>
<reference key="1">
    <citation type="journal article" date="1998" name="Science">
        <title>Genome sequence of the nematode C. elegans: a platform for investigating biology.</title>
        <authorList>
            <consortium name="The C. elegans sequencing consortium"/>
        </authorList>
    </citation>
    <scope>NUCLEOTIDE SEQUENCE [LARGE SCALE GENOMIC DNA]</scope>
    <source>
        <strain>Bristol N2</strain>
    </source>
</reference>
<reference key="2">
    <citation type="journal article" date="2000" name="Dev. Biol.">
        <title>The let-268 locus of Caenorhabditis elegans encodes a procollagen lysyl hydroxylase that is essential for type IV collagen secretion.</title>
        <authorList>
            <person name="Norman K.R."/>
            <person name="Moerman D.G."/>
        </authorList>
    </citation>
    <scope>FUNCTION</scope>
    <scope>SUBCELLULAR LOCATION</scope>
    <scope>MUTAGENESIS OF ASP-668 AND GLY-682</scope>
    <source>
        <strain>Bristol N2</strain>
    </source>
</reference>
<reference key="3">
    <citation type="journal article" date="2002" name="J. Biol. Chem.">
        <title>Identification of amino acids important for the catalytic activity of the collagen glucosyltransferase associated with the multifunctional lysyl hydroxylase 3 (LH3).</title>
        <authorList>
            <person name="Wang C."/>
            <person name="Risteli M."/>
            <person name="Heikkinen J."/>
            <person name="Hussa A.K."/>
            <person name="Uitto L."/>
            <person name="Myllyla R."/>
        </authorList>
    </citation>
    <scope>FUNCTION</scope>
    <scope>CATALYTIC ACTIVITY</scope>
    <scope>MUTAGENESIS OF PHE-131; CYS-132; LEU-196 AND ALA-453</scope>
</reference>
<reference key="4">
    <citation type="journal article" date="2003" name="Nat. Biotechnol.">
        <title>Lectin affinity capture, isotope-coded tagging and mass spectrometry to identify N-linked glycoproteins.</title>
        <authorList>
            <person name="Kaji H."/>
            <person name="Saito H."/>
            <person name="Yamauchi Y."/>
            <person name="Shinkawa T."/>
            <person name="Taoka M."/>
            <person name="Hirabayashi J."/>
            <person name="Kasai K."/>
            <person name="Takahashi N."/>
            <person name="Isobe T."/>
        </authorList>
    </citation>
    <scope>GLYCOSYLATION [LARGE SCALE ANALYSIS] AT ASN-689</scope>
    <scope>IDENTIFICATION BY MASS SPECTROMETRY</scope>
    <source>
        <strain>Bristol N2</strain>
    </source>
</reference>
<reference key="5">
    <citation type="journal article" date="2007" name="Mol. Cell. Proteomics">
        <title>Proteomics reveals N-linked glycoprotein diversity in Caenorhabditis elegans and suggests an atypical translocation mechanism for integral membrane proteins.</title>
        <authorList>
            <person name="Kaji H."/>
            <person name="Kamiie J."/>
            <person name="Kawakami H."/>
            <person name="Kido K."/>
            <person name="Yamauchi Y."/>
            <person name="Shinkawa T."/>
            <person name="Taoka M."/>
            <person name="Takahashi N."/>
            <person name="Isobe T."/>
        </authorList>
    </citation>
    <scope>GLYCOSYLATION [LARGE SCALE ANALYSIS] AT ASN-689</scope>
    <scope>IDENTIFICATION BY MASS SPECTROMETRY</scope>
    <source>
        <strain>Bristol N2</strain>
    </source>
</reference>
<dbReference type="EC" id="1.14.11.4" evidence="1"/>
<dbReference type="EC" id="2.4.1.50" evidence="1"/>
<dbReference type="EC" id="2.4.1.66" evidence="6"/>
<dbReference type="EMBL" id="Z66512">
    <property type="protein sequence ID" value="CAA91321.1"/>
    <property type="molecule type" value="Genomic_DNA"/>
</dbReference>
<dbReference type="PIR" id="T22517">
    <property type="entry name" value="T22517"/>
</dbReference>
<dbReference type="RefSeq" id="NP_001369887.1">
    <property type="nucleotide sequence ID" value="NM_001383930.1"/>
</dbReference>
<dbReference type="RefSeq" id="NP_496170.1">
    <property type="nucleotide sequence ID" value="NM_063769.3"/>
</dbReference>
<dbReference type="SMR" id="Q20679"/>
<dbReference type="BioGRID" id="39884">
    <property type="interactions" value="1"/>
</dbReference>
<dbReference type="FunCoup" id="Q20679">
    <property type="interactions" value="1272"/>
</dbReference>
<dbReference type="STRING" id="6239.F52H3.1.1"/>
<dbReference type="GlyCosmos" id="Q20679">
    <property type="glycosylation" value="1 site, No reported glycans"/>
</dbReference>
<dbReference type="iPTMnet" id="Q20679"/>
<dbReference type="PaxDb" id="6239-F52H3.1.1"/>
<dbReference type="PeptideAtlas" id="Q20679"/>
<dbReference type="EnsemblMetazoa" id="F52H3.1.1">
    <property type="protein sequence ID" value="F52H3.1.1"/>
    <property type="gene ID" value="WBGene00002497"/>
</dbReference>
<dbReference type="EnsemblMetazoa" id="F52H3.1.2">
    <property type="protein sequence ID" value="F52H3.1.2"/>
    <property type="gene ID" value="WBGene00002497"/>
</dbReference>
<dbReference type="EnsemblMetazoa" id="F52H3.1.3">
    <property type="protein sequence ID" value="F52H3.1.3"/>
    <property type="gene ID" value="WBGene00002497"/>
</dbReference>
<dbReference type="EnsemblMetazoa" id="F52H3.1.4">
    <property type="protein sequence ID" value="F52H3.1.4"/>
    <property type="gene ID" value="WBGene00002497"/>
</dbReference>
<dbReference type="GeneID" id="174564"/>
<dbReference type="UCSC" id="F52H3.1.1">
    <property type="organism name" value="c. elegans"/>
</dbReference>
<dbReference type="AGR" id="WB:WBGene00002497"/>
<dbReference type="WormBase" id="F52H3.1">
    <property type="protein sequence ID" value="CE03397"/>
    <property type="gene ID" value="WBGene00002497"/>
    <property type="gene designation" value="let-268"/>
</dbReference>
<dbReference type="eggNOG" id="KOG1971">
    <property type="taxonomic scope" value="Eukaryota"/>
</dbReference>
<dbReference type="GeneTree" id="ENSGT01030000234558"/>
<dbReference type="HOGENOM" id="CLU_022320_1_0_1"/>
<dbReference type="InParanoid" id="Q20679"/>
<dbReference type="OMA" id="TDVACNH"/>
<dbReference type="OrthoDB" id="69177at2759"/>
<dbReference type="PhylomeDB" id="Q20679"/>
<dbReference type="Reactome" id="R-CEL-1650814">
    <property type="pathway name" value="Collagen biosynthesis and modifying enzymes"/>
</dbReference>
<dbReference type="PRO" id="PR:Q20679"/>
<dbReference type="Proteomes" id="UP000001940">
    <property type="component" value="Chromosome II"/>
</dbReference>
<dbReference type="Bgee" id="WBGene00002497">
    <property type="expression patterns" value="Expressed in embryo and 3 other cell types or tissues"/>
</dbReference>
<dbReference type="GO" id="GO:0062023">
    <property type="term" value="C:collagen-containing extracellular matrix"/>
    <property type="evidence" value="ECO:0000318"/>
    <property type="project" value="GO_Central"/>
</dbReference>
<dbReference type="GO" id="GO:0005783">
    <property type="term" value="C:endoplasmic reticulum"/>
    <property type="evidence" value="ECO:0000318"/>
    <property type="project" value="GO_Central"/>
</dbReference>
<dbReference type="GO" id="GO:0005788">
    <property type="term" value="C:endoplasmic reticulum lumen"/>
    <property type="evidence" value="ECO:0007669"/>
    <property type="project" value="UniProtKB-SubCell"/>
</dbReference>
<dbReference type="GO" id="GO:0005789">
    <property type="term" value="C:endoplasmic reticulum membrane"/>
    <property type="evidence" value="ECO:0007669"/>
    <property type="project" value="UniProtKB-SubCell"/>
</dbReference>
<dbReference type="GO" id="GO:0005615">
    <property type="term" value="C:extracellular space"/>
    <property type="evidence" value="ECO:0000318"/>
    <property type="project" value="GO_Central"/>
</dbReference>
<dbReference type="GO" id="GO:0005794">
    <property type="term" value="C:Golgi apparatus"/>
    <property type="evidence" value="ECO:0000318"/>
    <property type="project" value="GO_Central"/>
</dbReference>
<dbReference type="GO" id="GO:0005791">
    <property type="term" value="C:rough endoplasmic reticulum"/>
    <property type="evidence" value="ECO:0007669"/>
    <property type="project" value="UniProtKB-SubCell"/>
</dbReference>
<dbReference type="GO" id="GO:0005506">
    <property type="term" value="F:iron ion binding"/>
    <property type="evidence" value="ECO:0007669"/>
    <property type="project" value="InterPro"/>
</dbReference>
<dbReference type="GO" id="GO:0031418">
    <property type="term" value="F:L-ascorbic acid binding"/>
    <property type="evidence" value="ECO:0007669"/>
    <property type="project" value="UniProtKB-KW"/>
</dbReference>
<dbReference type="GO" id="GO:0050211">
    <property type="term" value="F:procollagen galactosyltransferase activity"/>
    <property type="evidence" value="ECO:0007669"/>
    <property type="project" value="UniProtKB-EC"/>
</dbReference>
<dbReference type="GO" id="GO:0033823">
    <property type="term" value="F:procollagen glucosyltransferase activity"/>
    <property type="evidence" value="ECO:0007669"/>
    <property type="project" value="UniProtKB-EC"/>
</dbReference>
<dbReference type="GO" id="GO:0008475">
    <property type="term" value="F:procollagen-lysine 5-dioxygenase activity"/>
    <property type="evidence" value="ECO:0000318"/>
    <property type="project" value="GO_Central"/>
</dbReference>
<dbReference type="GO" id="GO:0003980">
    <property type="term" value="F:UDP-glucose:glycoprotein glucosyltransferase activity"/>
    <property type="evidence" value="ECO:0000314"/>
    <property type="project" value="WormBase"/>
</dbReference>
<dbReference type="GO" id="GO:0032964">
    <property type="term" value="P:collagen biosynthetic process"/>
    <property type="evidence" value="ECO:0000315"/>
    <property type="project" value="WormBase"/>
</dbReference>
<dbReference type="GO" id="GO:0030199">
    <property type="term" value="P:collagen fibril organization"/>
    <property type="evidence" value="ECO:0000318"/>
    <property type="project" value="GO_Central"/>
</dbReference>
<dbReference type="GO" id="GO:0006486">
    <property type="term" value="P:protein glycosylation"/>
    <property type="evidence" value="ECO:0000314"/>
    <property type="project" value="WormBase"/>
</dbReference>
<dbReference type="FunFam" id="2.60.120.620:FF:000047">
    <property type="entry name" value="Multifunctional procollagen lysine hydroxylase and glycosyltransferase"/>
    <property type="match status" value="1"/>
</dbReference>
<dbReference type="Gene3D" id="2.60.120.620">
    <property type="entry name" value="q2cbj1_9rhob like domain"/>
    <property type="match status" value="1"/>
</dbReference>
<dbReference type="InterPro" id="IPR050757">
    <property type="entry name" value="Collagen_mod_GT25"/>
</dbReference>
<dbReference type="InterPro" id="IPR044861">
    <property type="entry name" value="IPNS-like_FE2OG_OXY"/>
</dbReference>
<dbReference type="InterPro" id="IPR029044">
    <property type="entry name" value="Nucleotide-diphossugar_trans"/>
</dbReference>
<dbReference type="InterPro" id="IPR005123">
    <property type="entry name" value="Oxoglu/Fe-dep_dioxygenase_dom"/>
</dbReference>
<dbReference type="InterPro" id="IPR006620">
    <property type="entry name" value="Pro_4_hyd_alph"/>
</dbReference>
<dbReference type="InterPro" id="IPR001006">
    <property type="entry name" value="Procol_lys_dOase"/>
</dbReference>
<dbReference type="PANTHER" id="PTHR10730:SF45">
    <property type="entry name" value="PROCOLLAGEN-LYSINE,2-OXOGLUTARATE 5-DIOXYGENASE"/>
    <property type="match status" value="1"/>
</dbReference>
<dbReference type="PANTHER" id="PTHR10730">
    <property type="entry name" value="PROCOLLAGEN-LYSINE,2-OXOGLUTARATE 5-DIOXYGENASE/GLYCOSYLTRANSFERASE 25 FAMILY MEMBER"/>
    <property type="match status" value="1"/>
</dbReference>
<dbReference type="Pfam" id="PF03171">
    <property type="entry name" value="2OG-FeII_Oxy"/>
    <property type="match status" value="1"/>
</dbReference>
<dbReference type="Pfam" id="PF25342">
    <property type="entry name" value="GT_PLOD"/>
    <property type="match status" value="1"/>
</dbReference>
<dbReference type="Pfam" id="PF25238">
    <property type="entry name" value="OGFOD2-like"/>
    <property type="match status" value="1"/>
</dbReference>
<dbReference type="SMART" id="SM00702">
    <property type="entry name" value="P4Hc"/>
    <property type="match status" value="1"/>
</dbReference>
<dbReference type="SUPFAM" id="SSF53448">
    <property type="entry name" value="Nucleotide-diphospho-sugar transferases"/>
    <property type="match status" value="1"/>
</dbReference>
<dbReference type="PROSITE" id="PS51471">
    <property type="entry name" value="FE2OG_OXY"/>
    <property type="match status" value="1"/>
</dbReference>
<dbReference type="PROSITE" id="PS01325">
    <property type="entry name" value="LYS_HYDROXYLASE"/>
    <property type="match status" value="1"/>
</dbReference>
<sequence length="730" mass="84425">MRVLPFLLPLIPVLLATTITDLPELVVVTVATENTDGLKRLLESAKAFDINIEVLGLGEKWNGGDTRIEQGGGQKIRILSDWIEKYKDASDTMIMFVDAYDVVFNADSTTILRKFFEHYSEKRLLFGAEPFCWPDQSLAPEYPIVEFGKRFLNSGLFMGYGPEMHKILKLKSVEDKDDDQLYYTMIYLDEKLRKELNMDLDSMSKIFQNLNGVIEDVELQFKEDGTPEAYNAAYNTKPLIVHGNGPSKSHLNYLGNYLGNRWNSQLGCRTCGLEVKESEEVPLIALNLFISKPIPFIEEVLQKIAEFDYPKEKIALYIYNNQPFSIKNIQDFLQKHGKSYYTKRVINGVTEIGDREARNEAIEWNKARNVEFAFLMDGDAYFSEPKVIKDLIQYSKTYDVGIIAPMIGQPGKLFTNFWGAIAANGYYARSEDYMAIVKGNRVGYWNVPFITSAVLFNKEKLEAMKDAYSYNKNLDPDMSMCKFARDNGHFLYIDNEKYYGFLIVSDEYAETVTEGKWHPEMWQIFENRELWEARYIHPGYHKIMEPEHVVDQACPDVYDFPLMSERFCEELIEEMEGFGRWSDGSNNDKRLAGGYENVPTRDIHMNQVGFERQWLYFMDTYVRPVQEKTFIGYYHQPVESNMMFVVRYKPEEQPSLRPHHDASTFSIDIALNKKGRDYEGGGVRYIRYNCTVPADEVGYAMMFPGRLTHLHEGLATTKGTRYIMVSFINP</sequence>
<comment type="function">
    <text evidence="1 5 6">Multifunctional enzyme that catalyzes a series of post-translational modifications on Lys residues in procollagen (PubMed:11896059). Catalyzes the formation of hydroxylysine residues in -Xaa-Lys-Gly- sequences in type IV collagens (By similarity). Transfers galactose onto hydroxylysine groups, giving rise to galactosyl 5-hydroxylysine (By similarity). Catalyzes the subsequent transfer of glucose moieties, giving rise to 1,2-glucosylgalactosyl-5-hydroxylysine residues (PubMed:11896059). Essential for normal biosynthesis and secretion of type IV collagens (PubMed:11071784, PubMed:11896059). Essential for normal stability of the basement membrane (PubMed:11071784).</text>
</comment>
<comment type="catalytic activity">
    <reaction evidence="1">
        <text>L-lysyl-[collagen] + 2-oxoglutarate + O2 = (5R)-5-hydroxy-L-lysyl-[collagen] + succinate + CO2</text>
        <dbReference type="Rhea" id="RHEA:16569"/>
        <dbReference type="Rhea" id="RHEA-COMP:12751"/>
        <dbReference type="Rhea" id="RHEA-COMP:12752"/>
        <dbReference type="ChEBI" id="CHEBI:15379"/>
        <dbReference type="ChEBI" id="CHEBI:16526"/>
        <dbReference type="ChEBI" id="CHEBI:16810"/>
        <dbReference type="ChEBI" id="CHEBI:29969"/>
        <dbReference type="ChEBI" id="CHEBI:30031"/>
        <dbReference type="ChEBI" id="CHEBI:133442"/>
        <dbReference type="EC" id="1.14.11.4"/>
    </reaction>
</comment>
<comment type="catalytic activity">
    <reaction evidence="1">
        <text>(5R)-5-hydroxy-L-lysyl-[collagen] + UDP-alpha-D-galactose = (5R)-5-O-(beta-D-galactosyl)-5-hydroxy-L-lysyl-[collagen] + UDP + H(+)</text>
        <dbReference type="Rhea" id="RHEA:12637"/>
        <dbReference type="Rhea" id="RHEA-COMP:12752"/>
        <dbReference type="Rhea" id="RHEA-COMP:12753"/>
        <dbReference type="ChEBI" id="CHEBI:15378"/>
        <dbReference type="ChEBI" id="CHEBI:58223"/>
        <dbReference type="ChEBI" id="CHEBI:66914"/>
        <dbReference type="ChEBI" id="CHEBI:133442"/>
        <dbReference type="ChEBI" id="CHEBI:133443"/>
        <dbReference type="EC" id="2.4.1.50"/>
    </reaction>
</comment>
<comment type="catalytic activity">
    <reaction evidence="6">
        <text>(5R)-5-O-(beta-D-galactosyl)-5-hydroxy-L-lysyl-[collagen] + UDP-alpha-D-glucose = (5R)-5-O-[alpha-D-glucosyl-(1-&gt;2)-beta-D-galactosyl]-5-hydroxy-L-lysyl-[collagen] + UDP + H(+)</text>
        <dbReference type="Rhea" id="RHEA:12576"/>
        <dbReference type="Rhea" id="RHEA-COMP:12753"/>
        <dbReference type="Rhea" id="RHEA-COMP:12754"/>
        <dbReference type="ChEBI" id="CHEBI:15378"/>
        <dbReference type="ChEBI" id="CHEBI:58223"/>
        <dbReference type="ChEBI" id="CHEBI:58885"/>
        <dbReference type="ChEBI" id="CHEBI:133443"/>
        <dbReference type="ChEBI" id="CHEBI:133452"/>
        <dbReference type="EC" id="2.4.1.66"/>
    </reaction>
</comment>
<comment type="cofactor">
    <cofactor evidence="1">
        <name>Fe(2+)</name>
        <dbReference type="ChEBI" id="CHEBI:29033"/>
    </cofactor>
</comment>
<comment type="cofactor">
    <cofactor evidence="1">
        <name>L-ascorbate</name>
        <dbReference type="ChEBI" id="CHEBI:38290"/>
    </cofactor>
</comment>
<comment type="cofactor">
    <cofactor evidence="1">
        <name>Mn(2+)</name>
        <dbReference type="ChEBI" id="CHEBI:29035"/>
    </cofactor>
</comment>
<comment type="subunit">
    <text evidence="1">Homodimer.</text>
</comment>
<comment type="subcellular location">
    <subcellularLocation>
        <location evidence="1">Rough endoplasmic reticulum</location>
    </subcellularLocation>
    <subcellularLocation>
        <location evidence="9">Endoplasmic reticulum lumen</location>
    </subcellularLocation>
    <subcellularLocation>
        <location evidence="2">Endoplasmic reticulum membrane</location>
        <topology evidence="2">Peripheral membrane protein</topology>
        <orientation evidence="2">Lumenal side</orientation>
    </subcellularLocation>
    <subcellularLocation>
        <location evidence="1">Secreted</location>
    </subcellularLocation>
    <subcellularLocation>
        <location evidence="2">Secreted</location>
        <location evidence="2">Extracellular space</location>
    </subcellularLocation>
    <text evidence="2">The majority of the secreted protein is associated with the extracellular matrix.</text>
</comment>
<comment type="domain">
    <text evidence="1">The N-terminal domain mediates glycosyltransferase activity.</text>
</comment>
<comment type="domain">
    <text evidence="1">The C-terminal domain that mediates lysyl hydroxylase activity is also important for homodimerization.</text>
</comment>
<keyword id="KW-0223">Dioxygenase</keyword>
<keyword id="KW-1015">Disulfide bond</keyword>
<keyword id="KW-0256">Endoplasmic reticulum</keyword>
<keyword id="KW-0325">Glycoprotein</keyword>
<keyword id="KW-0328">Glycosyltransferase</keyword>
<keyword id="KW-0408">Iron</keyword>
<keyword id="KW-0464">Manganese</keyword>
<keyword id="KW-0472">Membrane</keyword>
<keyword id="KW-0479">Metal-binding</keyword>
<keyword id="KW-0511">Multifunctional enzyme</keyword>
<keyword id="KW-0560">Oxidoreductase</keyword>
<keyword id="KW-1185">Reference proteome</keyword>
<keyword id="KW-0964">Secreted</keyword>
<keyword id="KW-0732">Signal</keyword>
<keyword id="KW-0808">Transferase</keyword>
<keyword id="KW-0847">Vitamin C</keyword>
<organism>
    <name type="scientific">Caenorhabditis elegans</name>
    <dbReference type="NCBI Taxonomy" id="6239"/>
    <lineage>
        <taxon>Eukaryota</taxon>
        <taxon>Metazoa</taxon>
        <taxon>Ecdysozoa</taxon>
        <taxon>Nematoda</taxon>
        <taxon>Chromadorea</taxon>
        <taxon>Rhabditida</taxon>
        <taxon>Rhabditina</taxon>
        <taxon>Rhabditomorpha</taxon>
        <taxon>Rhabditoidea</taxon>
        <taxon>Rhabditidae</taxon>
        <taxon>Peloderinae</taxon>
        <taxon>Caenorhabditis</taxon>
    </lineage>
</organism>
<evidence type="ECO:0000250" key="1">
    <source>
        <dbReference type="UniProtKB" id="O60568"/>
    </source>
</evidence>
<evidence type="ECO:0000250" key="2">
    <source>
        <dbReference type="UniProtKB" id="Q9R0E1"/>
    </source>
</evidence>
<evidence type="ECO:0000255" key="3"/>
<evidence type="ECO:0000255" key="4">
    <source>
        <dbReference type="PROSITE-ProRule" id="PRU00805"/>
    </source>
</evidence>
<evidence type="ECO:0000269" key="5">
    <source>
    </source>
</evidence>
<evidence type="ECO:0000269" key="6">
    <source>
    </source>
</evidence>
<evidence type="ECO:0000269" key="7">
    <source>
    </source>
</evidence>
<evidence type="ECO:0000269" key="8">
    <source>
    </source>
</evidence>
<evidence type="ECO:0000305" key="9">
    <source>
    </source>
</evidence>
<accession>Q20679</accession>
<feature type="signal peptide" evidence="3">
    <location>
        <begin position="1"/>
        <end position="16"/>
    </location>
</feature>
<feature type="chain" id="PRO_0000024689" description="Multifunctional procollagen lysine hydroxylase and glycosyltransferase">
    <location>
        <begin position="17"/>
        <end position="730"/>
    </location>
</feature>
<feature type="domain" description="Fe2OG dioxygenase" evidence="4">
    <location>
        <begin position="639"/>
        <end position="730"/>
    </location>
</feature>
<feature type="region of interest" description="Required for glycosyltransferase activity" evidence="1">
    <location>
        <begin position="20"/>
        <end position="280"/>
    </location>
</feature>
<feature type="region of interest" description="Accessory region" evidence="1">
    <location>
        <begin position="281"/>
        <end position="507"/>
    </location>
</feature>
<feature type="region of interest" description="Important for dimerization" evidence="1">
    <location>
        <begin position="664"/>
        <end position="707"/>
    </location>
</feature>
<feature type="binding site" evidence="1">
    <location>
        <begin position="30"/>
        <end position="32"/>
    </location>
    <ligand>
        <name>UDP</name>
        <dbReference type="ChEBI" id="CHEBI:58223"/>
    </ligand>
</feature>
<feature type="binding site" evidence="1">
    <location>
        <begin position="98"/>
        <end position="100"/>
    </location>
    <ligand>
        <name>UDP</name>
        <dbReference type="ChEBI" id="CHEBI:58223"/>
    </ligand>
</feature>
<feature type="binding site" evidence="1">
    <location>
        <position position="98"/>
    </location>
    <ligand>
        <name>Mn(2+)</name>
        <dbReference type="ChEBI" id="CHEBI:29035"/>
    </ligand>
</feature>
<feature type="binding site" evidence="1">
    <location>
        <position position="101"/>
    </location>
    <ligand>
        <name>Mn(2+)</name>
        <dbReference type="ChEBI" id="CHEBI:29035"/>
    </ligand>
</feature>
<feature type="binding site" evidence="1">
    <location>
        <position position="242"/>
    </location>
    <ligand>
        <name>Mn(2+)</name>
        <dbReference type="ChEBI" id="CHEBI:29035"/>
    </ligand>
</feature>
<feature type="binding site" evidence="1">
    <location>
        <begin position="245"/>
        <end position="248"/>
    </location>
    <ligand>
        <name>UDP</name>
        <dbReference type="ChEBI" id="CHEBI:58223"/>
    </ligand>
</feature>
<feature type="binding site" evidence="1">
    <location>
        <position position="590"/>
    </location>
    <ligand>
        <name>2-oxoglutarate</name>
        <dbReference type="ChEBI" id="CHEBI:16810"/>
    </ligand>
</feature>
<feature type="binding site" evidence="1">
    <location>
        <position position="648"/>
    </location>
    <ligand>
        <name>2-oxoglutarate</name>
        <dbReference type="ChEBI" id="CHEBI:16810"/>
    </ligand>
</feature>
<feature type="binding site" evidence="4">
    <location>
        <position position="659"/>
    </location>
    <ligand>
        <name>Fe cation</name>
        <dbReference type="ChEBI" id="CHEBI:24875"/>
    </ligand>
</feature>
<feature type="binding site" evidence="4">
    <location>
        <position position="661"/>
    </location>
    <ligand>
        <name>Fe cation</name>
        <dbReference type="ChEBI" id="CHEBI:24875"/>
    </ligand>
</feature>
<feature type="binding site" evidence="4">
    <location>
        <position position="711"/>
    </location>
    <ligand>
        <name>Fe cation</name>
        <dbReference type="ChEBI" id="CHEBI:24875"/>
    </ligand>
</feature>
<feature type="binding site" evidence="1">
    <location>
        <position position="721"/>
    </location>
    <ligand>
        <name>2-oxoglutarate</name>
        <dbReference type="ChEBI" id="CHEBI:16810"/>
    </ligand>
</feature>
<feature type="glycosylation site" description="N-linked (GlcNAc...) asparagine" evidence="7 8">
    <location>
        <position position="689"/>
    </location>
</feature>
<feature type="disulfide bond" evidence="1">
    <location>
        <begin position="268"/>
        <end position="271"/>
    </location>
</feature>
<feature type="disulfide bond" evidence="1">
    <location>
        <begin position="554"/>
        <end position="690"/>
    </location>
</feature>
<feature type="mutagenesis site" description="Nearly abolishes glucosyltransferase activity." evidence="6">
    <original>F</original>
    <variation>I</variation>
    <location>
        <position position="131"/>
    </location>
</feature>
<feature type="mutagenesis site" description="Loss of glucosyltransferase activity." evidence="6">
    <original>C</original>
    <variation>I</variation>
    <location>
        <position position="132"/>
    </location>
</feature>
<feature type="mutagenesis site" description="Strongly reduced glucosyltransferase activity." evidence="6">
    <original>L</original>
    <variation>I</variation>
    <location>
        <position position="196"/>
    </location>
</feature>
<feature type="mutagenesis site" description="Loss of glucosyltransferase activity." evidence="6">
    <original>A</original>
    <variation>I</variation>
    <location>
        <position position="453"/>
    </location>
</feature>
<feature type="mutagenesis site" description="In let-268(mn189); lethal effect." evidence="5">
    <original>D</original>
    <variation>R</variation>
    <location>
        <position position="668"/>
    </location>
</feature>
<feature type="mutagenesis site" description="In let-268(mn198); lethal effect." evidence="5">
    <original>G</original>
    <variation>D</variation>
    <location>
        <position position="682"/>
    </location>
</feature>
<name>PLOD_CAEEL</name>